<sequence>MNPVRKKRLIIVLAIVAGVGAAVGLALSALQQNINLFYTPTQIANGEAPTDTRIRAGGLVEKGSLQRSEDSLNVRFVVTDGAKEVTIAYHGILPDLFREGQGIVALGKLGGDGVLVADEVLAKHDENYMPPEVTKALKDSGQLKHYENGKAAGETSYNQEGK</sequence>
<name>CCME_PSEAE</name>
<proteinExistence type="inferred from homology"/>
<reference key="1">
    <citation type="journal article" date="2000" name="Nature">
        <title>Complete genome sequence of Pseudomonas aeruginosa PAO1, an opportunistic pathogen.</title>
        <authorList>
            <person name="Stover C.K."/>
            <person name="Pham X.-Q.T."/>
            <person name="Erwin A.L."/>
            <person name="Mizoguchi S.D."/>
            <person name="Warrener P."/>
            <person name="Hickey M.J."/>
            <person name="Brinkman F.S.L."/>
            <person name="Hufnagle W.O."/>
            <person name="Kowalik D.J."/>
            <person name="Lagrou M."/>
            <person name="Garber R.L."/>
            <person name="Goltry L."/>
            <person name="Tolentino E."/>
            <person name="Westbrock-Wadman S."/>
            <person name="Yuan Y."/>
            <person name="Brody L.L."/>
            <person name="Coulter S.N."/>
            <person name="Folger K.R."/>
            <person name="Kas A."/>
            <person name="Larbig K."/>
            <person name="Lim R.M."/>
            <person name="Smith K.A."/>
            <person name="Spencer D.H."/>
            <person name="Wong G.K.-S."/>
            <person name="Wu Z."/>
            <person name="Paulsen I.T."/>
            <person name="Reizer J."/>
            <person name="Saier M.H. Jr."/>
            <person name="Hancock R.E.W."/>
            <person name="Lory S."/>
            <person name="Olson M.V."/>
        </authorList>
    </citation>
    <scope>NUCLEOTIDE SEQUENCE [LARGE SCALE GENOMIC DNA]</scope>
    <source>
        <strain>ATCC 15692 / DSM 22644 / CIP 104116 / JCM 14847 / LMG 12228 / 1C / PRS 101 / PAO1</strain>
    </source>
</reference>
<comment type="function">
    <text evidence="1">Heme chaperone required for the biogenesis of c-type cytochromes. Transiently binds heme delivered by CcmC and transfers the heme to apo-cytochromes in a process facilitated by CcmF and CcmH.</text>
</comment>
<comment type="subcellular location">
    <subcellularLocation>
        <location evidence="1">Cell inner membrane</location>
        <topology evidence="1">Single-pass type II membrane protein</topology>
        <orientation evidence="1">Periplasmic side</orientation>
    </subcellularLocation>
</comment>
<comment type="similarity">
    <text evidence="1">Belongs to the CcmE/CycJ family.</text>
</comment>
<feature type="chain" id="PRO_0000238834" description="Cytochrome c-type biogenesis protein CcmE">
    <location>
        <begin position="1"/>
        <end position="162"/>
    </location>
</feature>
<feature type="topological domain" description="Cytoplasmic" evidence="1">
    <location>
        <begin position="1"/>
        <end position="8"/>
    </location>
</feature>
<feature type="transmembrane region" description="Helical; Signal-anchor for type II membrane protein" evidence="1">
    <location>
        <begin position="9"/>
        <end position="29"/>
    </location>
</feature>
<feature type="topological domain" description="Periplasmic" evidence="1">
    <location>
        <begin position="30"/>
        <end position="162"/>
    </location>
</feature>
<feature type="region of interest" description="Disordered" evidence="2">
    <location>
        <begin position="139"/>
        <end position="162"/>
    </location>
</feature>
<feature type="compositionally biased region" description="Basic and acidic residues" evidence="2">
    <location>
        <begin position="139"/>
        <end position="148"/>
    </location>
</feature>
<feature type="binding site" description="covalent" evidence="1">
    <location>
        <position position="124"/>
    </location>
    <ligand>
        <name>heme</name>
        <dbReference type="ChEBI" id="CHEBI:30413"/>
    </ligand>
</feature>
<feature type="binding site" description="axial binding residue" evidence="1">
    <location>
        <position position="128"/>
    </location>
    <ligand>
        <name>heme</name>
        <dbReference type="ChEBI" id="CHEBI:30413"/>
    </ligand>
    <ligandPart>
        <name>Fe</name>
        <dbReference type="ChEBI" id="CHEBI:18248"/>
    </ligandPart>
</feature>
<evidence type="ECO:0000255" key="1">
    <source>
        <dbReference type="HAMAP-Rule" id="MF_01959"/>
    </source>
</evidence>
<evidence type="ECO:0000256" key="2">
    <source>
        <dbReference type="SAM" id="MobiDB-lite"/>
    </source>
</evidence>
<gene>
    <name evidence="1" type="primary">ccmE</name>
    <name evidence="1" type="synonym">cycJ</name>
    <name type="ordered locus">PA1479</name>
</gene>
<protein>
    <recommendedName>
        <fullName evidence="1">Cytochrome c-type biogenesis protein CcmE</fullName>
    </recommendedName>
    <alternativeName>
        <fullName evidence="1">Cytochrome c maturation protein E</fullName>
    </alternativeName>
    <alternativeName>
        <fullName evidence="1">Heme chaperone CcmE</fullName>
    </alternativeName>
</protein>
<accession>Q9I3N3</accession>
<keyword id="KW-0997">Cell inner membrane</keyword>
<keyword id="KW-1003">Cell membrane</keyword>
<keyword id="KW-0201">Cytochrome c-type biogenesis</keyword>
<keyword id="KW-0349">Heme</keyword>
<keyword id="KW-0408">Iron</keyword>
<keyword id="KW-0472">Membrane</keyword>
<keyword id="KW-0479">Metal-binding</keyword>
<keyword id="KW-1185">Reference proteome</keyword>
<keyword id="KW-0735">Signal-anchor</keyword>
<keyword id="KW-0812">Transmembrane</keyword>
<keyword id="KW-1133">Transmembrane helix</keyword>
<dbReference type="EMBL" id="AE004091">
    <property type="protein sequence ID" value="AAG04868.1"/>
    <property type="molecule type" value="Genomic_DNA"/>
</dbReference>
<dbReference type="PIR" id="H83459">
    <property type="entry name" value="H83459"/>
</dbReference>
<dbReference type="RefSeq" id="NP_250170.1">
    <property type="nucleotide sequence ID" value="NC_002516.2"/>
</dbReference>
<dbReference type="RefSeq" id="WP_003107323.1">
    <property type="nucleotide sequence ID" value="NZ_QZGE01000005.1"/>
</dbReference>
<dbReference type="SMR" id="Q9I3N3"/>
<dbReference type="FunCoup" id="Q9I3N3">
    <property type="interactions" value="48"/>
</dbReference>
<dbReference type="STRING" id="208964.PA1479"/>
<dbReference type="PaxDb" id="208964-PA1479"/>
<dbReference type="GeneID" id="881024"/>
<dbReference type="KEGG" id="pae:PA1479"/>
<dbReference type="PATRIC" id="fig|208964.12.peg.1530"/>
<dbReference type="PseudoCAP" id="PA1479"/>
<dbReference type="HOGENOM" id="CLU_079503_1_1_6"/>
<dbReference type="InParanoid" id="Q9I3N3"/>
<dbReference type="OrthoDB" id="9793584at2"/>
<dbReference type="PhylomeDB" id="Q9I3N3"/>
<dbReference type="BioCyc" id="PAER208964:G1FZ6-1505-MONOMER"/>
<dbReference type="Proteomes" id="UP000002438">
    <property type="component" value="Chromosome"/>
</dbReference>
<dbReference type="GO" id="GO:0005886">
    <property type="term" value="C:plasma membrane"/>
    <property type="evidence" value="ECO:0007669"/>
    <property type="project" value="UniProtKB-SubCell"/>
</dbReference>
<dbReference type="GO" id="GO:0020037">
    <property type="term" value="F:heme binding"/>
    <property type="evidence" value="ECO:0007669"/>
    <property type="project" value="InterPro"/>
</dbReference>
<dbReference type="GO" id="GO:0046872">
    <property type="term" value="F:metal ion binding"/>
    <property type="evidence" value="ECO:0007669"/>
    <property type="project" value="UniProtKB-KW"/>
</dbReference>
<dbReference type="GO" id="GO:0017004">
    <property type="term" value="P:cytochrome complex assembly"/>
    <property type="evidence" value="ECO:0007669"/>
    <property type="project" value="UniProtKB-KW"/>
</dbReference>
<dbReference type="FunFam" id="2.40.50.140:FF:000104">
    <property type="entry name" value="Cytochrome c-type biogenesis protein CcmE"/>
    <property type="match status" value="1"/>
</dbReference>
<dbReference type="Gene3D" id="2.40.50.140">
    <property type="entry name" value="Nucleic acid-binding proteins"/>
    <property type="match status" value="1"/>
</dbReference>
<dbReference type="HAMAP" id="MF_01959">
    <property type="entry name" value="CcmE"/>
    <property type="match status" value="1"/>
</dbReference>
<dbReference type="InterPro" id="IPR004329">
    <property type="entry name" value="CcmE"/>
</dbReference>
<dbReference type="InterPro" id="IPR036127">
    <property type="entry name" value="CcmE-like_sf"/>
</dbReference>
<dbReference type="InterPro" id="IPR012340">
    <property type="entry name" value="NA-bd_OB-fold"/>
</dbReference>
<dbReference type="NCBIfam" id="NF009727">
    <property type="entry name" value="PRK13254.1-1"/>
    <property type="match status" value="1"/>
</dbReference>
<dbReference type="NCBIfam" id="NF009729">
    <property type="entry name" value="PRK13254.1-3"/>
    <property type="match status" value="1"/>
</dbReference>
<dbReference type="NCBIfam" id="NF009731">
    <property type="entry name" value="PRK13254.1-5"/>
    <property type="match status" value="1"/>
</dbReference>
<dbReference type="PANTHER" id="PTHR34128">
    <property type="entry name" value="CYTOCHROME C-TYPE BIOGENESIS PROTEIN CCME HOMOLOG, MITOCHONDRIAL"/>
    <property type="match status" value="1"/>
</dbReference>
<dbReference type="PANTHER" id="PTHR34128:SF2">
    <property type="entry name" value="CYTOCHROME C-TYPE BIOGENESIS PROTEIN CCME HOMOLOG, MITOCHONDRIAL"/>
    <property type="match status" value="1"/>
</dbReference>
<dbReference type="Pfam" id="PF03100">
    <property type="entry name" value="CcmE"/>
    <property type="match status" value="1"/>
</dbReference>
<dbReference type="SUPFAM" id="SSF82093">
    <property type="entry name" value="Heme chaperone CcmE"/>
    <property type="match status" value="1"/>
</dbReference>
<organism>
    <name type="scientific">Pseudomonas aeruginosa (strain ATCC 15692 / DSM 22644 / CIP 104116 / JCM 14847 / LMG 12228 / 1C / PRS 101 / PAO1)</name>
    <dbReference type="NCBI Taxonomy" id="208964"/>
    <lineage>
        <taxon>Bacteria</taxon>
        <taxon>Pseudomonadati</taxon>
        <taxon>Pseudomonadota</taxon>
        <taxon>Gammaproteobacteria</taxon>
        <taxon>Pseudomonadales</taxon>
        <taxon>Pseudomonadaceae</taxon>
        <taxon>Pseudomonas</taxon>
    </lineage>
</organism>